<proteinExistence type="evidence at protein level"/>
<dbReference type="EMBL" id="AY257976">
    <property type="protein sequence ID" value="AAO91939.1"/>
    <property type="molecule type" value="mRNA"/>
</dbReference>
<dbReference type="EMBL" id="AC015976">
    <property type="status" value="NOT_ANNOTATED_CDS"/>
    <property type="molecule type" value="Genomic_DNA"/>
</dbReference>
<dbReference type="EMBL" id="CH471058">
    <property type="protein sequence ID" value="EAX11185.1"/>
    <property type="molecule type" value="Genomic_DNA"/>
</dbReference>
<dbReference type="EMBL" id="CH471058">
    <property type="protein sequence ID" value="EAX11187.1"/>
    <property type="molecule type" value="Genomic_DNA"/>
</dbReference>
<dbReference type="EMBL" id="BC036189">
    <property type="protein sequence ID" value="AAH36189.2"/>
    <property type="molecule type" value="mRNA"/>
</dbReference>
<dbReference type="EMBL" id="BC053351">
    <property type="protein sequence ID" value="AAH53351.1"/>
    <property type="molecule type" value="mRNA"/>
</dbReference>
<dbReference type="CCDS" id="CCDS2247.2">
    <molecule id="P56177-1"/>
</dbReference>
<dbReference type="CCDS" id="CCDS33328.1">
    <molecule id="P56177-2"/>
</dbReference>
<dbReference type="PIR" id="A53495">
    <property type="entry name" value="A53495"/>
</dbReference>
<dbReference type="RefSeq" id="NP_001033582.1">
    <molecule id="P56177-2"/>
    <property type="nucleotide sequence ID" value="NM_001038493.2"/>
</dbReference>
<dbReference type="RefSeq" id="NP_835221.2">
    <molecule id="P56177-1"/>
    <property type="nucleotide sequence ID" value="NM_178120.5"/>
</dbReference>
<dbReference type="RefSeq" id="XP_054196861.1">
    <molecule id="P56177-1"/>
    <property type="nucleotide sequence ID" value="XM_054340886.1"/>
</dbReference>
<dbReference type="SMR" id="P56177"/>
<dbReference type="BioGRID" id="108089">
    <property type="interactions" value="7"/>
</dbReference>
<dbReference type="FunCoup" id="P56177">
    <property type="interactions" value="3152"/>
</dbReference>
<dbReference type="IntAct" id="P56177">
    <property type="interactions" value="6"/>
</dbReference>
<dbReference type="MINT" id="P56177"/>
<dbReference type="STRING" id="9606.ENSP00000354478"/>
<dbReference type="GlyGen" id="P56177">
    <property type="glycosylation" value="1 site, 1 O-linked glycan (1 site)"/>
</dbReference>
<dbReference type="iPTMnet" id="P56177"/>
<dbReference type="PhosphoSitePlus" id="P56177"/>
<dbReference type="BioMuta" id="DLX1"/>
<dbReference type="DMDM" id="116241335"/>
<dbReference type="jPOST" id="P56177"/>
<dbReference type="MassIVE" id="P56177"/>
<dbReference type="PaxDb" id="9606-ENSP00000354478"/>
<dbReference type="PeptideAtlas" id="P56177"/>
<dbReference type="ProteomicsDB" id="56890">
    <molecule id="P56177-1"/>
</dbReference>
<dbReference type="Pumba" id="P56177"/>
<dbReference type="ABCD" id="P56177">
    <property type="antibodies" value="1 sequenced antibody"/>
</dbReference>
<dbReference type="Antibodypedia" id="33859">
    <property type="antibodies" value="371 antibodies from 34 providers"/>
</dbReference>
<dbReference type="DNASU" id="1745"/>
<dbReference type="Ensembl" id="ENST00000341900.6">
    <molecule id="P56177-2"/>
    <property type="protein sequence ID" value="ENSP00000341786.6"/>
    <property type="gene ID" value="ENSG00000144355.15"/>
</dbReference>
<dbReference type="Ensembl" id="ENST00000361725.5">
    <molecule id="P56177-1"/>
    <property type="protein sequence ID" value="ENSP00000354478.4"/>
    <property type="gene ID" value="ENSG00000144355.15"/>
</dbReference>
<dbReference type="Ensembl" id="ENST00000709712.1">
    <molecule id="P56177-1"/>
    <property type="protein sequence ID" value="ENSP00000517836.1"/>
    <property type="gene ID" value="ENSG00000292098.1"/>
</dbReference>
<dbReference type="Ensembl" id="ENST00000709713.1">
    <molecule id="P56177-2"/>
    <property type="protein sequence ID" value="ENSP00000517837.1"/>
    <property type="gene ID" value="ENSG00000292098.1"/>
</dbReference>
<dbReference type="GeneID" id="1745"/>
<dbReference type="KEGG" id="hsa:1745"/>
<dbReference type="MANE-Select" id="ENST00000361725.5">
    <property type="protein sequence ID" value="ENSP00000354478.4"/>
    <property type="RefSeq nucleotide sequence ID" value="NM_178120.5"/>
    <property type="RefSeq protein sequence ID" value="NP_835221.2"/>
</dbReference>
<dbReference type="UCSC" id="uc002uhm.4">
    <molecule id="P56177-1"/>
    <property type="organism name" value="human"/>
</dbReference>
<dbReference type="AGR" id="HGNC:2914"/>
<dbReference type="CTD" id="1745"/>
<dbReference type="DisGeNET" id="1745"/>
<dbReference type="GeneCards" id="DLX1"/>
<dbReference type="HGNC" id="HGNC:2914">
    <property type="gene designation" value="DLX1"/>
</dbReference>
<dbReference type="HPA" id="ENSG00000144355">
    <property type="expression patterns" value="Tissue enriched (brain)"/>
</dbReference>
<dbReference type="MIM" id="600029">
    <property type="type" value="gene"/>
</dbReference>
<dbReference type="neXtProt" id="NX_P56177"/>
<dbReference type="OpenTargets" id="ENSG00000144355"/>
<dbReference type="PharmGKB" id="PA27369"/>
<dbReference type="VEuPathDB" id="HostDB:ENSG00000144355"/>
<dbReference type="eggNOG" id="KOG0850">
    <property type="taxonomic scope" value="Eukaryota"/>
</dbReference>
<dbReference type="GeneTree" id="ENSGT00940000160029"/>
<dbReference type="HOGENOM" id="CLU_2170222_0_0_1"/>
<dbReference type="InParanoid" id="P56177"/>
<dbReference type="OMA" id="GPPVWNT"/>
<dbReference type="OrthoDB" id="6159439at2759"/>
<dbReference type="PAN-GO" id="P56177">
    <property type="GO annotations" value="5 GO annotations based on evolutionary models"/>
</dbReference>
<dbReference type="PhylomeDB" id="P56177"/>
<dbReference type="TreeFam" id="TF315720"/>
<dbReference type="PathwayCommons" id="P56177"/>
<dbReference type="SignaLink" id="P56177"/>
<dbReference type="BioGRID-ORCS" id="1745">
    <property type="hits" value="15 hits in 1190 CRISPR screens"/>
</dbReference>
<dbReference type="GeneWiki" id="DLX1"/>
<dbReference type="GenomeRNAi" id="1745"/>
<dbReference type="Pharos" id="P56177">
    <property type="development level" value="Tbio"/>
</dbReference>
<dbReference type="PRO" id="PR:P56177"/>
<dbReference type="Proteomes" id="UP000005640">
    <property type="component" value="Chromosome 2"/>
</dbReference>
<dbReference type="RNAct" id="P56177">
    <property type="molecule type" value="protein"/>
</dbReference>
<dbReference type="Bgee" id="ENSG00000144355">
    <property type="expression patterns" value="Expressed in middle temporal gyrus and 112 other cell types or tissues"/>
</dbReference>
<dbReference type="ExpressionAtlas" id="P56177">
    <property type="expression patterns" value="baseline and differential"/>
</dbReference>
<dbReference type="GO" id="GO:0000785">
    <property type="term" value="C:chromatin"/>
    <property type="evidence" value="ECO:0000247"/>
    <property type="project" value="NTNU_SB"/>
</dbReference>
<dbReference type="GO" id="GO:0005829">
    <property type="term" value="C:cytosol"/>
    <property type="evidence" value="ECO:0000314"/>
    <property type="project" value="HPA"/>
</dbReference>
<dbReference type="GO" id="GO:0043231">
    <property type="term" value="C:intracellular membrane-bounded organelle"/>
    <property type="evidence" value="ECO:0000314"/>
    <property type="project" value="HPA"/>
</dbReference>
<dbReference type="GO" id="GO:0005654">
    <property type="term" value="C:nucleoplasm"/>
    <property type="evidence" value="ECO:0000314"/>
    <property type="project" value="HPA"/>
</dbReference>
<dbReference type="GO" id="GO:0005634">
    <property type="term" value="C:nucleus"/>
    <property type="evidence" value="ECO:0000314"/>
    <property type="project" value="UniProtKB"/>
</dbReference>
<dbReference type="GO" id="GO:0003682">
    <property type="term" value="F:chromatin binding"/>
    <property type="evidence" value="ECO:0007669"/>
    <property type="project" value="Ensembl"/>
</dbReference>
<dbReference type="GO" id="GO:0000981">
    <property type="term" value="F:DNA-binding transcription factor activity, RNA polymerase II-specific"/>
    <property type="evidence" value="ECO:0000247"/>
    <property type="project" value="NTNU_SB"/>
</dbReference>
<dbReference type="GO" id="GO:0000978">
    <property type="term" value="F:RNA polymerase II cis-regulatory region sequence-specific DNA binding"/>
    <property type="evidence" value="ECO:0000318"/>
    <property type="project" value="GO_Central"/>
</dbReference>
<dbReference type="GO" id="GO:1990837">
    <property type="term" value="F:sequence-specific double-stranded DNA binding"/>
    <property type="evidence" value="ECO:0000314"/>
    <property type="project" value="ARUK-UCL"/>
</dbReference>
<dbReference type="GO" id="GO:0030154">
    <property type="term" value="P:cell differentiation"/>
    <property type="evidence" value="ECO:0000318"/>
    <property type="project" value="GO_Central"/>
</dbReference>
<dbReference type="GO" id="GO:0071773">
    <property type="term" value="P:cellular response to BMP stimulus"/>
    <property type="evidence" value="ECO:0000315"/>
    <property type="project" value="UniProtKB"/>
</dbReference>
<dbReference type="GO" id="GO:0071560">
    <property type="term" value="P:cellular response to transforming growth factor beta stimulus"/>
    <property type="evidence" value="ECO:0000315"/>
    <property type="project" value="UniProtKB"/>
</dbReference>
<dbReference type="GO" id="GO:0021893">
    <property type="term" value="P:cerebral cortex GABAergic interneuron fate commitment"/>
    <property type="evidence" value="ECO:0007669"/>
    <property type="project" value="Ensembl"/>
</dbReference>
<dbReference type="GO" id="GO:0048706">
    <property type="term" value="P:embryonic skeletal system development"/>
    <property type="evidence" value="ECO:0000318"/>
    <property type="project" value="GO_Central"/>
</dbReference>
<dbReference type="GO" id="GO:0021766">
    <property type="term" value="P:hippocampus development"/>
    <property type="evidence" value="ECO:0007669"/>
    <property type="project" value="Ensembl"/>
</dbReference>
<dbReference type="GO" id="GO:0030514">
    <property type="term" value="P:negative regulation of BMP signaling pathway"/>
    <property type="evidence" value="ECO:0000315"/>
    <property type="project" value="UniProtKB"/>
</dbReference>
<dbReference type="GO" id="GO:1903845">
    <property type="term" value="P:negative regulation of cellular response to transforming growth factor beta stimulus"/>
    <property type="evidence" value="ECO:0000315"/>
    <property type="project" value="UniProtKB"/>
</dbReference>
<dbReference type="GO" id="GO:0043524">
    <property type="term" value="P:negative regulation of neuron apoptotic process"/>
    <property type="evidence" value="ECO:0007669"/>
    <property type="project" value="Ensembl"/>
</dbReference>
<dbReference type="GO" id="GO:0045746">
    <property type="term" value="P:negative regulation of Notch signaling pathway"/>
    <property type="evidence" value="ECO:0007669"/>
    <property type="project" value="Ensembl"/>
</dbReference>
<dbReference type="GO" id="GO:0048715">
    <property type="term" value="P:negative regulation of oligodendrocyte differentiation"/>
    <property type="evidence" value="ECO:0007669"/>
    <property type="project" value="Ensembl"/>
</dbReference>
<dbReference type="GO" id="GO:0046533">
    <property type="term" value="P:negative regulation of photoreceptor cell differentiation"/>
    <property type="evidence" value="ECO:0000250"/>
    <property type="project" value="UniProtKB"/>
</dbReference>
<dbReference type="GO" id="GO:0000122">
    <property type="term" value="P:negative regulation of transcription by RNA polymerase II"/>
    <property type="evidence" value="ECO:0000315"/>
    <property type="project" value="UniProtKB"/>
</dbReference>
<dbReference type="GO" id="GO:0014016">
    <property type="term" value="P:neuroblast differentiation"/>
    <property type="evidence" value="ECO:0007669"/>
    <property type="project" value="Ensembl"/>
</dbReference>
<dbReference type="GO" id="GO:0051402">
    <property type="term" value="P:neuron apoptotic process"/>
    <property type="evidence" value="ECO:0007669"/>
    <property type="project" value="Ensembl"/>
</dbReference>
<dbReference type="GO" id="GO:0007219">
    <property type="term" value="P:Notch signaling pathway"/>
    <property type="evidence" value="ECO:0007669"/>
    <property type="project" value="Ensembl"/>
</dbReference>
<dbReference type="GO" id="GO:0042475">
    <property type="term" value="P:odontogenesis of dentin-containing tooth"/>
    <property type="evidence" value="ECO:0007669"/>
    <property type="project" value="Ensembl"/>
</dbReference>
<dbReference type="GO" id="GO:0048709">
    <property type="term" value="P:oligodendrocyte differentiation"/>
    <property type="evidence" value="ECO:0007669"/>
    <property type="project" value="Ensembl"/>
</dbReference>
<dbReference type="GO" id="GO:1902871">
    <property type="term" value="P:positive regulation of amacrine cell differentiation"/>
    <property type="evidence" value="ECO:0000250"/>
    <property type="project" value="UniProtKB"/>
</dbReference>
<dbReference type="GO" id="GO:0045597">
    <property type="term" value="P:positive regulation of cell differentiation"/>
    <property type="evidence" value="ECO:0000250"/>
    <property type="project" value="UniProtKB"/>
</dbReference>
<dbReference type="GO" id="GO:0045944">
    <property type="term" value="P:positive regulation of transcription by RNA polymerase II"/>
    <property type="evidence" value="ECO:0000315"/>
    <property type="project" value="UniProtKB"/>
</dbReference>
<dbReference type="GO" id="GO:0009954">
    <property type="term" value="P:proximal/distal pattern formation"/>
    <property type="evidence" value="ECO:0007669"/>
    <property type="project" value="Ensembl"/>
</dbReference>
<dbReference type="GO" id="GO:0006357">
    <property type="term" value="P:regulation of transcription by RNA polymerase II"/>
    <property type="evidence" value="ECO:0000318"/>
    <property type="project" value="GO_Central"/>
</dbReference>
<dbReference type="GO" id="GO:0021544">
    <property type="term" value="P:subpallium development"/>
    <property type="evidence" value="ECO:0007669"/>
    <property type="project" value="Ensembl"/>
</dbReference>
<dbReference type="CDD" id="cd00086">
    <property type="entry name" value="homeodomain"/>
    <property type="match status" value="1"/>
</dbReference>
<dbReference type="FunFam" id="1.10.10.60:FF:000074">
    <property type="entry name" value="Distal-less homeobox 1"/>
    <property type="match status" value="1"/>
</dbReference>
<dbReference type="Gene3D" id="1.10.10.60">
    <property type="entry name" value="Homeodomain-like"/>
    <property type="match status" value="1"/>
</dbReference>
<dbReference type="InterPro" id="IPR050460">
    <property type="entry name" value="Distal-less_Homeobox_TF"/>
</dbReference>
<dbReference type="InterPro" id="IPR001356">
    <property type="entry name" value="HD"/>
</dbReference>
<dbReference type="InterPro" id="IPR020479">
    <property type="entry name" value="HD_metazoa"/>
</dbReference>
<dbReference type="InterPro" id="IPR017970">
    <property type="entry name" value="Homeobox_CS"/>
</dbReference>
<dbReference type="InterPro" id="IPR009057">
    <property type="entry name" value="Homeodomain-like_sf"/>
</dbReference>
<dbReference type="InterPro" id="IPR000047">
    <property type="entry name" value="HTH_motif"/>
</dbReference>
<dbReference type="PANTHER" id="PTHR24327">
    <property type="entry name" value="HOMEOBOX PROTEIN"/>
    <property type="match status" value="1"/>
</dbReference>
<dbReference type="PANTHER" id="PTHR24327:SF33">
    <property type="entry name" value="HOMEOBOX PROTEIN DLX-1"/>
    <property type="match status" value="1"/>
</dbReference>
<dbReference type="Pfam" id="PF00046">
    <property type="entry name" value="Homeodomain"/>
    <property type="match status" value="1"/>
</dbReference>
<dbReference type="PRINTS" id="PR00024">
    <property type="entry name" value="HOMEOBOX"/>
</dbReference>
<dbReference type="PRINTS" id="PR00031">
    <property type="entry name" value="HTHREPRESSR"/>
</dbReference>
<dbReference type="SMART" id="SM00389">
    <property type="entry name" value="HOX"/>
    <property type="match status" value="1"/>
</dbReference>
<dbReference type="SUPFAM" id="SSF46689">
    <property type="entry name" value="Homeodomain-like"/>
    <property type="match status" value="1"/>
</dbReference>
<dbReference type="PROSITE" id="PS00027">
    <property type="entry name" value="HOMEOBOX_1"/>
    <property type="match status" value="1"/>
</dbReference>
<dbReference type="PROSITE" id="PS50071">
    <property type="entry name" value="HOMEOBOX_2"/>
    <property type="match status" value="1"/>
</dbReference>
<sequence length="255" mass="27320">MTMTTMPESLNSPVSGKAVFMEFGPPNQQMSPSPMSHGHYSMHCLHSAGHSQPDGAYSSASSFSRPLGYPYVNSVSSHASSPYISSVQSYPGSASLAQSRLEDPGADSEKSTVVEGGEVRFNGKGKKIRKPRTIYSSLQLQALNRRFQQTQYLALPERAELAASLGLTQTQVKIWFQNKRSKFKKLMKQGGAALEGSALANGRALSAGSPPVPPGWNPNSSSGKGSGGNAGSYIPSYTSWYPSAHQEAMQQPQLM</sequence>
<gene>
    <name type="primary">DLX1</name>
</gene>
<organism>
    <name type="scientific">Homo sapiens</name>
    <name type="common">Human</name>
    <dbReference type="NCBI Taxonomy" id="9606"/>
    <lineage>
        <taxon>Eukaryota</taxon>
        <taxon>Metazoa</taxon>
        <taxon>Chordata</taxon>
        <taxon>Craniata</taxon>
        <taxon>Vertebrata</taxon>
        <taxon>Euteleostomi</taxon>
        <taxon>Mammalia</taxon>
        <taxon>Eutheria</taxon>
        <taxon>Euarchontoglires</taxon>
        <taxon>Primates</taxon>
        <taxon>Haplorrhini</taxon>
        <taxon>Catarrhini</taxon>
        <taxon>Hominidae</taxon>
        <taxon>Homo</taxon>
    </lineage>
</organism>
<feature type="chain" id="PRO_0000049020" description="Homeobox protein DLX-1">
    <location>
        <begin position="1"/>
        <end position="255"/>
    </location>
</feature>
<feature type="DNA-binding region" description="Homeobox" evidence="2">
    <location>
        <begin position="128"/>
        <end position="187"/>
    </location>
</feature>
<feature type="region of interest" description="Disordered" evidence="3">
    <location>
        <begin position="1"/>
        <end position="38"/>
    </location>
</feature>
<feature type="region of interest" description="Disordered" evidence="3">
    <location>
        <begin position="95"/>
        <end position="118"/>
    </location>
</feature>
<feature type="region of interest" description="Disordered" evidence="3">
    <location>
        <begin position="204"/>
        <end position="230"/>
    </location>
</feature>
<feature type="compositionally biased region" description="Polar residues" evidence="3">
    <location>
        <begin position="1"/>
        <end position="14"/>
    </location>
</feature>
<feature type="compositionally biased region" description="Low complexity" evidence="3">
    <location>
        <begin position="25"/>
        <end position="36"/>
    </location>
</feature>
<feature type="compositionally biased region" description="Basic and acidic residues" evidence="3">
    <location>
        <begin position="100"/>
        <end position="112"/>
    </location>
</feature>
<feature type="splice variant" id="VSP_043589" description="In isoform 2." evidence="6">
    <original>ADSEKSTVVEGGEVRFNGKGKKIRKPRTIYSSLQLQALNRRFQQTQYLALPERAELAASLGLTQTQVKIWFQNKRSKFKKLMKQGGAALEGSALANGRALSAGSPPVPPGWNPNSSSGKGSGGNAGSYIPSYTSWYPSAHQEAMQQPQLM</original>
    <variation>QDLVPKQAIQVQEADEAGWGGSGG</variation>
    <location>
        <begin position="106"/>
        <end position="255"/>
    </location>
</feature>
<feature type="sequence variant" id="VAR_028443" description="In dbSNP:rs17853565." evidence="5">
    <original>S</original>
    <variation>C</variation>
    <location>
        <position position="136"/>
    </location>
</feature>
<keyword id="KW-0010">Activator</keyword>
<keyword id="KW-0025">Alternative splicing</keyword>
<keyword id="KW-0217">Developmental protein</keyword>
<keyword id="KW-0221">Differentiation</keyword>
<keyword id="KW-0238">DNA-binding</keyword>
<keyword id="KW-0371">Homeobox</keyword>
<keyword id="KW-0539">Nucleus</keyword>
<keyword id="KW-1267">Proteomics identification</keyword>
<keyword id="KW-1185">Reference proteome</keyword>
<keyword id="KW-0678">Repressor</keyword>
<keyword id="KW-0804">Transcription</keyword>
<keyword id="KW-0805">Transcription regulation</keyword>
<accession>P56177</accession>
<accession>D3DPD7</accession>
<accession>Q53ZU4</accession>
<accession>Q7Z724</accession>
<accession>Q8IYB2</accession>
<name>DLX1_HUMAN</name>
<protein>
    <recommendedName>
        <fullName>Homeobox protein DLX-1</fullName>
    </recommendedName>
</protein>
<comment type="function">
    <text evidence="1 4">Plays a role as a transcriptional activator or repressor (PubMed:14671321). Inhibits several cytokine signaling pathways, such as TGFB1, activin-A/INHBA and BMP4 by interfering with the transcriptional stimulatory activity of transcription factors, such as MSX2, FAST2, SMAD2 and SMAD3 during hematopoietic cell differentiation (PubMed:14671321). Plays a role in terminal differentiation of interneurons, such as amacrine and bipolar cells in the developing retina (By similarity). Likely to play a regulatory role in the development of the ventral forebrain (By similarity). May play a role in craniofacial patterning and morphogenesis and may be involved in the early development of diencephalic subdivisions (By similarity).</text>
</comment>
<comment type="subunit">
    <text evidence="1 4">Interacts with SMAD4 (via homeobox DNA-binding domain) (PubMed:14671321). Interacts (via homeobox DNA-binding domain) with POU4F2; this interaction suppresses DLX1-mediated transcriptional activity in postnatal retina and enhances retinal ganglion cell (RGC) differentiation (By similarity).</text>
</comment>
<comment type="subcellular location">
    <subcellularLocation>
        <location evidence="4">Nucleus</location>
    </subcellularLocation>
</comment>
<comment type="alternative products">
    <event type="alternative splicing"/>
    <isoform>
        <id>P56177-1</id>
        <name>1</name>
        <sequence type="displayed"/>
    </isoform>
    <isoform>
        <id>P56177-2</id>
        <name>2</name>
        <sequence type="described" ref="VSP_043589"/>
    </isoform>
</comment>
<comment type="tissue specificity">
    <text evidence="4">Expressed in hematopoietic cell lines.</text>
</comment>
<comment type="domain">
    <text evidence="4">The homeobox DNA-binding domain is necessary for its nuclear localization, transcriptional and erythroid differentiation activities (PubMed:14671321).</text>
</comment>
<comment type="similarity">
    <text evidence="7">Belongs to the distal-less homeobox family.</text>
</comment>
<evidence type="ECO:0000250" key="1">
    <source>
        <dbReference type="UniProtKB" id="Q64317"/>
    </source>
</evidence>
<evidence type="ECO:0000255" key="2">
    <source>
        <dbReference type="PROSITE-ProRule" id="PRU00108"/>
    </source>
</evidence>
<evidence type="ECO:0000256" key="3">
    <source>
        <dbReference type="SAM" id="MobiDB-lite"/>
    </source>
</evidence>
<evidence type="ECO:0000269" key="4">
    <source>
    </source>
</evidence>
<evidence type="ECO:0000269" key="5">
    <source>
    </source>
</evidence>
<evidence type="ECO:0000303" key="6">
    <source>
    </source>
</evidence>
<evidence type="ECO:0000305" key="7"/>
<reference key="1">
    <citation type="journal article" date="2003" name="Proc. Natl. Acad. Sci. U.S.A.">
        <title>Homeoprotein DLX-1 interacts with Smad4 and blocks a signaling pathway from activin A in hematopoietic cells.</title>
        <authorList>
            <person name="Chiba S."/>
            <person name="Takeshita K."/>
            <person name="Imai Y."/>
            <person name="Kumano K."/>
            <person name="Kurokawa M."/>
            <person name="Masuda S."/>
            <person name="Shimizu K."/>
            <person name="Nakamura S."/>
            <person name="Ruddle F.H."/>
            <person name="Hirai H."/>
        </authorList>
    </citation>
    <scope>NUCLEOTIDE SEQUENCE [MRNA] (ISOFORM 1)</scope>
    <scope>FUNCTION</scope>
    <scope>INTERACTION WITH SMAD4</scope>
    <scope>SUBCELLULAR LOCATION</scope>
    <scope>TISSUE SPECIFICITY</scope>
    <scope>DOMAIN</scope>
</reference>
<reference key="2">
    <citation type="journal article" date="2005" name="Nature">
        <title>Generation and annotation of the DNA sequences of human chromosomes 2 and 4.</title>
        <authorList>
            <person name="Hillier L.W."/>
            <person name="Graves T.A."/>
            <person name="Fulton R.S."/>
            <person name="Fulton L.A."/>
            <person name="Pepin K.H."/>
            <person name="Minx P."/>
            <person name="Wagner-McPherson C."/>
            <person name="Layman D."/>
            <person name="Wylie K."/>
            <person name="Sekhon M."/>
            <person name="Becker M.C."/>
            <person name="Fewell G.A."/>
            <person name="Delehaunty K.D."/>
            <person name="Miner T.L."/>
            <person name="Nash W.E."/>
            <person name="Kremitzki C."/>
            <person name="Oddy L."/>
            <person name="Du H."/>
            <person name="Sun H."/>
            <person name="Bradshaw-Cordum H."/>
            <person name="Ali J."/>
            <person name="Carter J."/>
            <person name="Cordes M."/>
            <person name="Harris A."/>
            <person name="Isak A."/>
            <person name="van Brunt A."/>
            <person name="Nguyen C."/>
            <person name="Du F."/>
            <person name="Courtney L."/>
            <person name="Kalicki J."/>
            <person name="Ozersky P."/>
            <person name="Abbott S."/>
            <person name="Armstrong J."/>
            <person name="Belter E.A."/>
            <person name="Caruso L."/>
            <person name="Cedroni M."/>
            <person name="Cotton M."/>
            <person name="Davidson T."/>
            <person name="Desai A."/>
            <person name="Elliott G."/>
            <person name="Erb T."/>
            <person name="Fronick C."/>
            <person name="Gaige T."/>
            <person name="Haakenson W."/>
            <person name="Haglund K."/>
            <person name="Holmes A."/>
            <person name="Harkins R."/>
            <person name="Kim K."/>
            <person name="Kruchowski S.S."/>
            <person name="Strong C.M."/>
            <person name="Grewal N."/>
            <person name="Goyea E."/>
            <person name="Hou S."/>
            <person name="Levy A."/>
            <person name="Martinka S."/>
            <person name="Mead K."/>
            <person name="McLellan M.D."/>
            <person name="Meyer R."/>
            <person name="Randall-Maher J."/>
            <person name="Tomlinson C."/>
            <person name="Dauphin-Kohlberg S."/>
            <person name="Kozlowicz-Reilly A."/>
            <person name="Shah N."/>
            <person name="Swearengen-Shahid S."/>
            <person name="Snider J."/>
            <person name="Strong J.T."/>
            <person name="Thompson J."/>
            <person name="Yoakum M."/>
            <person name="Leonard S."/>
            <person name="Pearman C."/>
            <person name="Trani L."/>
            <person name="Radionenko M."/>
            <person name="Waligorski J.E."/>
            <person name="Wang C."/>
            <person name="Rock S.M."/>
            <person name="Tin-Wollam A.-M."/>
            <person name="Maupin R."/>
            <person name="Latreille P."/>
            <person name="Wendl M.C."/>
            <person name="Yang S.-P."/>
            <person name="Pohl C."/>
            <person name="Wallis J.W."/>
            <person name="Spieth J."/>
            <person name="Bieri T.A."/>
            <person name="Berkowicz N."/>
            <person name="Nelson J.O."/>
            <person name="Osborne J."/>
            <person name="Ding L."/>
            <person name="Meyer R."/>
            <person name="Sabo A."/>
            <person name="Shotland Y."/>
            <person name="Sinha P."/>
            <person name="Wohldmann P.E."/>
            <person name="Cook L.L."/>
            <person name="Hickenbotham M.T."/>
            <person name="Eldred J."/>
            <person name="Williams D."/>
            <person name="Jones T.A."/>
            <person name="She X."/>
            <person name="Ciccarelli F.D."/>
            <person name="Izaurralde E."/>
            <person name="Taylor J."/>
            <person name="Schmutz J."/>
            <person name="Myers R.M."/>
            <person name="Cox D.R."/>
            <person name="Huang X."/>
            <person name="McPherson J.D."/>
            <person name="Mardis E.R."/>
            <person name="Clifton S.W."/>
            <person name="Warren W.C."/>
            <person name="Chinwalla A.T."/>
            <person name="Eddy S.R."/>
            <person name="Marra M.A."/>
            <person name="Ovcharenko I."/>
            <person name="Furey T.S."/>
            <person name="Miller W."/>
            <person name="Eichler E.E."/>
            <person name="Bork P."/>
            <person name="Suyama M."/>
            <person name="Torrents D."/>
            <person name="Waterston R.H."/>
            <person name="Wilson R.K."/>
        </authorList>
    </citation>
    <scope>NUCLEOTIDE SEQUENCE [LARGE SCALE GENOMIC DNA]</scope>
</reference>
<reference key="3">
    <citation type="submission" date="2005-09" db="EMBL/GenBank/DDBJ databases">
        <authorList>
            <person name="Mural R.J."/>
            <person name="Istrail S."/>
            <person name="Sutton G.G."/>
            <person name="Florea L."/>
            <person name="Halpern A.L."/>
            <person name="Mobarry C.M."/>
            <person name="Lippert R."/>
            <person name="Walenz B."/>
            <person name="Shatkay H."/>
            <person name="Dew I."/>
            <person name="Miller J.R."/>
            <person name="Flanigan M.J."/>
            <person name="Edwards N.J."/>
            <person name="Bolanos R."/>
            <person name="Fasulo D."/>
            <person name="Halldorsson B.V."/>
            <person name="Hannenhalli S."/>
            <person name="Turner R."/>
            <person name="Yooseph S."/>
            <person name="Lu F."/>
            <person name="Nusskern D.R."/>
            <person name="Shue B.C."/>
            <person name="Zheng X.H."/>
            <person name="Zhong F."/>
            <person name="Delcher A.L."/>
            <person name="Huson D.H."/>
            <person name="Kravitz S.A."/>
            <person name="Mouchard L."/>
            <person name="Reinert K."/>
            <person name="Remington K.A."/>
            <person name="Clark A.G."/>
            <person name="Waterman M.S."/>
            <person name="Eichler E.E."/>
            <person name="Adams M.D."/>
            <person name="Hunkapiller M.W."/>
            <person name="Myers E.W."/>
            <person name="Venter J.C."/>
        </authorList>
    </citation>
    <scope>NUCLEOTIDE SEQUENCE [LARGE SCALE GENOMIC DNA]</scope>
</reference>
<reference key="4">
    <citation type="journal article" date="2004" name="Genome Res.">
        <title>The status, quality, and expansion of the NIH full-length cDNA project: the Mammalian Gene Collection (MGC).</title>
        <authorList>
            <consortium name="The MGC Project Team"/>
        </authorList>
    </citation>
    <scope>NUCLEOTIDE SEQUENCE [LARGE SCALE MRNA] (ISOFORMS 1 AND 2)</scope>
    <scope>VARIANT CYS-136</scope>
    <source>
        <tissue>Brain</tissue>
    </source>
</reference>
<reference key="5">
    <citation type="journal article" date="1994" name="Proc. Natl. Acad. Sci. U.S.A.">
        <title>Cloning and characterization of two members of the vertebrate Dlx gene family.</title>
        <authorList>
            <person name="Simeone A."/>
            <person name="Acampora D."/>
            <person name="Pannese M."/>
            <person name="D'Esposito M."/>
            <person name="Stornaiuolo A."/>
            <person name="Gulisano M."/>
            <person name="Mallamaci A."/>
            <person name="Kastury K."/>
            <person name="Druck T."/>
            <person name="Huebner K."/>
            <person name="Boncinelli E."/>
        </authorList>
    </citation>
    <scope>NUCLEOTIDE SEQUENCE [MRNA] OF 128-193 (ISOFORM 1)</scope>
    <source>
        <tissue>Embryo</tissue>
    </source>
</reference>